<organism>
    <name type="scientific">Escherichia coli O18:K1:H7 (strain IHE3034 / ExPEC)</name>
    <dbReference type="NCBI Taxonomy" id="714962"/>
    <lineage>
        <taxon>Bacteria</taxon>
        <taxon>Pseudomonadati</taxon>
        <taxon>Pseudomonadota</taxon>
        <taxon>Gammaproteobacteria</taxon>
        <taxon>Enterobacterales</taxon>
        <taxon>Enterobacteriaceae</taxon>
        <taxon>Escherichia</taxon>
    </lineage>
</organism>
<gene>
    <name type="primary">ecpB</name>
    <name type="synonym">matC</name>
    <name type="ordered locus">ECOK1_0279</name>
</gene>
<reference key="1">
    <citation type="journal article" date="2010" name="Microbiology">
        <title>Mat fimbriae promote biofilm formation by meningitis-associated Escherichia coli.</title>
        <authorList>
            <person name="Lehti T.A."/>
            <person name="Bauchart P."/>
            <person name="Heikkinen J."/>
            <person name="Hacker J."/>
            <person name="Korhonen T.K."/>
            <person name="Dobrindt U."/>
            <person name="Westerlund-Wikstrom B."/>
        </authorList>
    </citation>
    <scope>NUCLEOTIDE SEQUENCE [GENOMIC DNA]</scope>
    <scope>FUNCTION</scope>
    <scope>DISRUPTION PHENOTYPE</scope>
    <source>
        <strain>IHE3034 / ExPEC</strain>
    </source>
</reference>
<reference key="2">
    <citation type="journal article" date="2010" name="Proc. Natl. Acad. Sci. U.S.A.">
        <title>Identification of protective and broadly conserved vaccine antigens from the genome of extraintestinal pathogenic Escherichia coli.</title>
        <authorList>
            <person name="Moriel D.G."/>
            <person name="Bertoldi I."/>
            <person name="Spagnuolo A."/>
            <person name="Marchi S."/>
            <person name="Rosini R."/>
            <person name="Nesta B."/>
            <person name="Pastorello I."/>
            <person name="Corea V.A."/>
            <person name="Torricelli G."/>
            <person name="Cartocci E."/>
            <person name="Savino S."/>
            <person name="Scarselli M."/>
            <person name="Dobrindt U."/>
            <person name="Hacker J."/>
            <person name="Tettelin H."/>
            <person name="Tallon L.J."/>
            <person name="Sullivan S."/>
            <person name="Wieler L.H."/>
            <person name="Ewers C."/>
            <person name="Pickard D."/>
            <person name="Dougan G."/>
            <person name="Fontana M.R."/>
            <person name="Rappuoli R."/>
            <person name="Pizza M."/>
            <person name="Serino L."/>
        </authorList>
    </citation>
    <scope>NUCLEOTIDE SEQUENCE [LARGE SCALE GENOMIC DNA]</scope>
    <source>
        <strain>IHE3034 / ExPEC</strain>
    </source>
</reference>
<accession>D5CVJ9</accession>
<accession>D7RNS3</accession>
<protein>
    <recommendedName>
        <fullName>Probable fimbrial chaperone EcpB</fullName>
    </recommendedName>
    <alternativeName>
        <fullName>Meningitis associated and temperature regulated protein C</fullName>
    </alternativeName>
</protein>
<comment type="function">
    <text evidence="3">Part of the ecpRABCDE operon, which encodes the E.coli common pilus (ECP). ECP is found in both commensal and pathogenic strains and plays a dual role in early-stage biofilm development and host cell recognition.</text>
</comment>
<comment type="induction">
    <text evidence="1">Negatively regulated by H-NS. Positively regulated by IHF and EcpR (By similarity).</text>
</comment>
<comment type="disruption phenotype">
    <text evidence="3">Mutants do not express ECP and are defective in biofilm formation.</text>
</comment>
<comment type="similarity">
    <text evidence="4">Belongs to the EcpB/EcpE family.</text>
</comment>
<name>ECPB_ECOKI</name>
<proteinExistence type="inferred from homology"/>
<dbReference type="EMBL" id="HM102365">
    <property type="protein sequence ID" value="ADI59489.1"/>
    <property type="molecule type" value="Genomic_DNA"/>
</dbReference>
<dbReference type="EMBL" id="CP001969">
    <property type="protein sequence ID" value="ADE91664.1"/>
    <property type="molecule type" value="Genomic_DNA"/>
</dbReference>
<dbReference type="RefSeq" id="WP_014639452.1">
    <property type="nucleotide sequence ID" value="NC_017628.1"/>
</dbReference>
<dbReference type="SMR" id="D5CVJ9"/>
<dbReference type="KEGG" id="eih:ECOK1_0279"/>
<dbReference type="PATRIC" id="fig|714962.3.peg.279"/>
<dbReference type="HOGENOM" id="CLU_106652_0_0_6"/>
<dbReference type="Gene3D" id="2.60.40.10">
    <property type="entry name" value="Immunoglobulins"/>
    <property type="match status" value="1"/>
</dbReference>
<dbReference type="InterPro" id="IPR040695">
    <property type="entry name" value="EcpB_C"/>
</dbReference>
<dbReference type="InterPro" id="IPR013783">
    <property type="entry name" value="Ig-like_fold"/>
</dbReference>
<dbReference type="InterPro" id="IPR008962">
    <property type="entry name" value="PapD-like_sf"/>
</dbReference>
<dbReference type="Pfam" id="PF18649">
    <property type="entry name" value="EcpB_C"/>
    <property type="match status" value="1"/>
</dbReference>
<dbReference type="SUPFAM" id="SSF49354">
    <property type="entry name" value="PapD-like"/>
    <property type="match status" value="1"/>
</dbReference>
<feature type="signal peptide" evidence="2">
    <location>
        <begin position="1"/>
        <end position="20"/>
    </location>
</feature>
<feature type="chain" id="PRO_0000429479" description="Probable fimbrial chaperone EcpB">
    <location>
        <begin position="21"/>
        <end position="222"/>
    </location>
</feature>
<keyword id="KW-0143">Chaperone</keyword>
<keyword id="KW-1029">Fimbrium biogenesis</keyword>
<keyword id="KW-0732">Signal</keyword>
<sequence length="222" mass="24482">MKKHLLPLALLFSGISPAQALDVGDISSFMNSDSSTLSKTIQNSTDSGRLINIRLERLSSPLDDGQVIAMDKPDELLLTPASLLLPAQASEVIRFFYKGPADEKERYYRIVWFDQALSDAQRDNANRSAVATASARIGTILVVAPRQANYHFQYANGSLTNTGNATLRILAYGPCLKAANGKECKENYYLMPGKSRRFTHVDTADNKGRVALWQGDKFIPVK</sequence>
<evidence type="ECO:0000250" key="1"/>
<evidence type="ECO:0000255" key="2"/>
<evidence type="ECO:0000269" key="3">
    <source>
    </source>
</evidence>
<evidence type="ECO:0000305" key="4"/>